<dbReference type="EMBL" id="CR382139">
    <property type="protein sequence ID" value="CAR65928.1"/>
    <property type="molecule type" value="Genomic_DNA"/>
</dbReference>
<dbReference type="RefSeq" id="XP_002770593.1">
    <property type="nucleotide sequence ID" value="XM_002770547.1"/>
</dbReference>
<dbReference type="SMR" id="Q6BIV4"/>
<dbReference type="FunCoup" id="Q6BIV4">
    <property type="interactions" value="256"/>
</dbReference>
<dbReference type="STRING" id="284592.Q6BIV4"/>
<dbReference type="GlyCosmos" id="Q6BIV4">
    <property type="glycosylation" value="2 sites, No reported glycans"/>
</dbReference>
<dbReference type="GeneID" id="8999141"/>
<dbReference type="KEGG" id="dha:DEHA2G07326g"/>
<dbReference type="VEuPathDB" id="FungiDB:DEHA2G07326g"/>
<dbReference type="eggNOG" id="KOG1362">
    <property type="taxonomic scope" value="Eukaryota"/>
</dbReference>
<dbReference type="HOGENOM" id="CLU_026724_0_0_1"/>
<dbReference type="InParanoid" id="Q6BIV4"/>
<dbReference type="OMA" id="DTIFVAM"/>
<dbReference type="OrthoDB" id="44736at2759"/>
<dbReference type="Proteomes" id="UP000000599">
    <property type="component" value="Chromosome G"/>
</dbReference>
<dbReference type="GO" id="GO:0005886">
    <property type="term" value="C:plasma membrane"/>
    <property type="evidence" value="ECO:0007669"/>
    <property type="project" value="UniProtKB-SubCell"/>
</dbReference>
<dbReference type="GO" id="GO:0022857">
    <property type="term" value="F:transmembrane transporter activity"/>
    <property type="evidence" value="ECO:0007669"/>
    <property type="project" value="InterPro"/>
</dbReference>
<dbReference type="InterPro" id="IPR007603">
    <property type="entry name" value="Choline_transptr-like"/>
</dbReference>
<dbReference type="PANTHER" id="PTHR12385">
    <property type="entry name" value="CHOLINE TRANSPORTER-LIKE (SLC FAMILY 44)"/>
    <property type="match status" value="1"/>
</dbReference>
<dbReference type="PANTHER" id="PTHR12385:SF4">
    <property type="entry name" value="PROTEIN PNS1"/>
    <property type="match status" value="1"/>
</dbReference>
<dbReference type="Pfam" id="PF04515">
    <property type="entry name" value="Choline_transpo"/>
    <property type="match status" value="1"/>
</dbReference>
<reference key="1">
    <citation type="journal article" date="2004" name="Nature">
        <title>Genome evolution in yeasts.</title>
        <authorList>
            <person name="Dujon B."/>
            <person name="Sherman D."/>
            <person name="Fischer G."/>
            <person name="Durrens P."/>
            <person name="Casaregola S."/>
            <person name="Lafontaine I."/>
            <person name="de Montigny J."/>
            <person name="Marck C."/>
            <person name="Neuveglise C."/>
            <person name="Talla E."/>
            <person name="Goffard N."/>
            <person name="Frangeul L."/>
            <person name="Aigle M."/>
            <person name="Anthouard V."/>
            <person name="Babour A."/>
            <person name="Barbe V."/>
            <person name="Barnay S."/>
            <person name="Blanchin S."/>
            <person name="Beckerich J.-M."/>
            <person name="Beyne E."/>
            <person name="Bleykasten C."/>
            <person name="Boisrame A."/>
            <person name="Boyer J."/>
            <person name="Cattolico L."/>
            <person name="Confanioleri F."/>
            <person name="de Daruvar A."/>
            <person name="Despons L."/>
            <person name="Fabre E."/>
            <person name="Fairhead C."/>
            <person name="Ferry-Dumazet H."/>
            <person name="Groppi A."/>
            <person name="Hantraye F."/>
            <person name="Hennequin C."/>
            <person name="Jauniaux N."/>
            <person name="Joyet P."/>
            <person name="Kachouri R."/>
            <person name="Kerrest A."/>
            <person name="Koszul R."/>
            <person name="Lemaire M."/>
            <person name="Lesur I."/>
            <person name="Ma L."/>
            <person name="Muller H."/>
            <person name="Nicaud J.-M."/>
            <person name="Nikolski M."/>
            <person name="Oztas S."/>
            <person name="Ozier-Kalogeropoulos O."/>
            <person name="Pellenz S."/>
            <person name="Potier S."/>
            <person name="Richard G.-F."/>
            <person name="Straub M.-L."/>
            <person name="Suleau A."/>
            <person name="Swennen D."/>
            <person name="Tekaia F."/>
            <person name="Wesolowski-Louvel M."/>
            <person name="Westhof E."/>
            <person name="Wirth B."/>
            <person name="Zeniou-Meyer M."/>
            <person name="Zivanovic Y."/>
            <person name="Bolotin-Fukuhara M."/>
            <person name="Thierry A."/>
            <person name="Bouchier C."/>
            <person name="Caudron B."/>
            <person name="Scarpelli C."/>
            <person name="Gaillardin C."/>
            <person name="Weissenbach J."/>
            <person name="Wincker P."/>
            <person name="Souciet J.-L."/>
        </authorList>
    </citation>
    <scope>NUCLEOTIDE SEQUENCE [LARGE SCALE GENOMIC DNA]</scope>
    <source>
        <strain>ATCC 36239 / CBS 767 / BCRC 21394 / JCM 1990 / NBRC 0083 / IGC 2968</strain>
    </source>
</reference>
<organism>
    <name type="scientific">Debaryomyces hansenii (strain ATCC 36239 / CBS 767 / BCRC 21394 / JCM 1990 / NBRC 0083 / IGC 2968)</name>
    <name type="common">Yeast</name>
    <name type="synonym">Torulaspora hansenii</name>
    <dbReference type="NCBI Taxonomy" id="284592"/>
    <lineage>
        <taxon>Eukaryota</taxon>
        <taxon>Fungi</taxon>
        <taxon>Dikarya</taxon>
        <taxon>Ascomycota</taxon>
        <taxon>Saccharomycotina</taxon>
        <taxon>Pichiomycetes</taxon>
        <taxon>Debaryomycetaceae</taxon>
        <taxon>Debaryomyces</taxon>
    </lineage>
</organism>
<keyword id="KW-1003">Cell membrane</keyword>
<keyword id="KW-0325">Glycoprotein</keyword>
<keyword id="KW-0472">Membrane</keyword>
<keyword id="KW-1185">Reference proteome</keyword>
<keyword id="KW-0812">Transmembrane</keyword>
<keyword id="KW-1133">Transmembrane helix</keyword>
<keyword id="KW-0813">Transport</keyword>
<comment type="function">
    <text evidence="1">Probably involved in transport through the plasma membrane.</text>
</comment>
<comment type="subcellular location">
    <subcellularLocation>
        <location evidence="1">Cell membrane</location>
        <topology evidence="1">Multi-pass membrane protein</topology>
    </subcellularLocation>
</comment>
<comment type="similarity">
    <text evidence="4">Belongs to the CTL (choline transporter-like) family.</text>
</comment>
<protein>
    <recommendedName>
        <fullName>Protein PNS1</fullName>
    </recommendedName>
</protein>
<feature type="chain" id="PRO_0000191734" description="Protein PNS1">
    <location>
        <begin position="1"/>
        <end position="513"/>
    </location>
</feature>
<feature type="topological domain" description="Cytoplasmic" evidence="2">
    <location>
        <begin position="1"/>
        <end position="60"/>
    </location>
</feature>
<feature type="transmembrane region" description="Helical" evidence="2">
    <location>
        <begin position="61"/>
        <end position="81"/>
    </location>
</feature>
<feature type="topological domain" description="Extracellular" evidence="2">
    <location>
        <begin position="82"/>
        <end position="108"/>
    </location>
</feature>
<feature type="transmembrane region" description="Helical" evidence="2">
    <location>
        <begin position="109"/>
        <end position="129"/>
    </location>
</feature>
<feature type="topological domain" description="Cytoplasmic" evidence="2">
    <location>
        <begin position="130"/>
        <end position="136"/>
    </location>
</feature>
<feature type="transmembrane region" description="Helical" evidence="2">
    <location>
        <begin position="137"/>
        <end position="157"/>
    </location>
</feature>
<feature type="topological domain" description="Extracellular" evidence="2">
    <location>
        <begin position="158"/>
        <end position="163"/>
    </location>
</feature>
<feature type="transmembrane region" description="Helical" evidence="2">
    <location>
        <begin position="164"/>
        <end position="182"/>
    </location>
</feature>
<feature type="topological domain" description="Cytoplasmic" evidence="2">
    <location>
        <begin position="183"/>
        <end position="210"/>
    </location>
</feature>
<feature type="transmembrane region" description="Helical" evidence="2">
    <location>
        <begin position="211"/>
        <end position="231"/>
    </location>
</feature>
<feature type="topological domain" description="Extracellular" evidence="2">
    <location>
        <begin position="232"/>
        <end position="251"/>
    </location>
</feature>
<feature type="transmembrane region" description="Helical" evidence="2">
    <location>
        <begin position="252"/>
        <end position="272"/>
    </location>
</feature>
<feature type="topological domain" description="Cytoplasmic" evidence="2">
    <location>
        <begin position="273"/>
        <end position="309"/>
    </location>
</feature>
<feature type="transmembrane region" description="Helical" evidence="2">
    <location>
        <begin position="310"/>
        <end position="330"/>
    </location>
</feature>
<feature type="topological domain" description="Extracellular" evidence="2">
    <location>
        <begin position="331"/>
        <end position="346"/>
    </location>
</feature>
<feature type="transmembrane region" description="Helical" evidence="2">
    <location>
        <begin position="347"/>
        <end position="367"/>
    </location>
</feature>
<feature type="topological domain" description="Cytoplasmic" evidence="2">
    <location>
        <begin position="368"/>
        <end position="412"/>
    </location>
</feature>
<feature type="transmembrane region" description="Helical" evidence="2">
    <location>
        <begin position="413"/>
        <end position="433"/>
    </location>
</feature>
<feature type="topological domain" description="Extracellular" evidence="2">
    <location>
        <begin position="434"/>
        <end position="460"/>
    </location>
</feature>
<feature type="transmembrane region" description="Helical" evidence="2">
    <location>
        <begin position="461"/>
        <end position="481"/>
    </location>
</feature>
<feature type="topological domain" description="Cytoplasmic" evidence="2">
    <location>
        <begin position="482"/>
        <end position="513"/>
    </location>
</feature>
<feature type="region of interest" description="Disordered" evidence="3">
    <location>
        <begin position="1"/>
        <end position="41"/>
    </location>
</feature>
<feature type="compositionally biased region" description="Pro residues" evidence="3">
    <location>
        <begin position="1"/>
        <end position="13"/>
    </location>
</feature>
<feature type="glycosylation site" description="N-linked (GlcNAc...) asparagine" evidence="2">
    <location>
        <position position="97"/>
    </location>
</feature>
<feature type="glycosylation site" description="N-linked (GlcNAc...) asparagine" evidence="2">
    <location>
        <position position="441"/>
    </location>
</feature>
<gene>
    <name type="primary">PNS1</name>
    <name type="ordered locus">DEHA2G07326g</name>
</gene>
<accession>Q6BIV4</accession>
<accession>B5RV47</accession>
<name>PNS1_DEBHA</name>
<evidence type="ECO:0000250" key="1"/>
<evidence type="ECO:0000255" key="2"/>
<evidence type="ECO:0000256" key="3">
    <source>
        <dbReference type="SAM" id="MobiDB-lite"/>
    </source>
</evidence>
<evidence type="ECO:0000305" key="4"/>
<proteinExistence type="inferred from homology"/>
<sequence>MSNNNYPPPPNPPNYQGEEQVHNVQPDLENNQEKYYAEQPQPSQQFEESFKIDKPKWNDWPFTVFFLLTVAGFIAIAGITLNALKKTYGLQGSSIYNSTDTFTLNTNTIILFGFIIVVGVVLSVLIIVYARMAPRVFITTGLILNIILGLGTCIYYFVAHYYSAAIVFLVFTLFTAWCYWSCRHRIPFSATVLEITIDVMKRYPSTLITSFIGIIVSGLFSTLFSVVIVATYVKYDPDSQGCDVAGGGCSQSKLIGVLVFVFFAGYYISEVIKNVIHITIAGIYGTWYYLSNSDQGEPKHPALGAFKRAMTYCFGSVCFGSLIVSIIQLIRSFVQILKQNAFGSGDNCAGCGFLILDFVLGFIDWIVRYFNHYAYCYVALYGKSYLKSARDTFDLIRFKGMDALINDCFINTSLNLYSMFVGYVVALLAYFYLKFTDPAYNSSGTFYAPVVAFSFLISGQITRIALTVISSGISTFFVALAKDPEVFQMTNRDRFDEIFRNYPQVLQKITSDH</sequence>